<name>ARGC_STAAW</name>
<keyword id="KW-0028">Amino-acid biosynthesis</keyword>
<keyword id="KW-0055">Arginine biosynthesis</keyword>
<keyword id="KW-0963">Cytoplasm</keyword>
<keyword id="KW-0521">NADP</keyword>
<keyword id="KW-0560">Oxidoreductase</keyword>
<evidence type="ECO:0000255" key="1">
    <source>
        <dbReference type="HAMAP-Rule" id="MF_00150"/>
    </source>
</evidence>
<sequence>MIKVGIVGGSGYGAIELIRLLQTHPHVTIAHIYSHSKVDEPLKLTFPHLQHIMQHFEALTVDNNDCDVIFFATPAPVSKTCIPPLVEKGIHVIDLSGAFRIKNREIYEAYYKETAAAQDDLNHAIYSISEWQSFDNNGTKLISNPGCFPTATLLALHPLISEKIVDLSSIIIDAKTGVSGAGRSLSQRVHFSEMNENLSAYAIGNHKHKPEIEQYLSIIAGQDVSVIFTPHLVPMTRGILSTIYVKLSSEYTTESLHKLMTSYYANQPFVRIRDIGTFPTTKEVLGSNYCDIGIYVDETTQTAILVSVIDNLVKGASGQAIQNLNILYDFEVTTGLNQSPVYP</sequence>
<dbReference type="EC" id="1.2.1.38" evidence="1"/>
<dbReference type="EMBL" id="BA000033">
    <property type="protein sequence ID" value="BAB94023.1"/>
    <property type="molecule type" value="Genomic_DNA"/>
</dbReference>
<dbReference type="RefSeq" id="WP_000598483.1">
    <property type="nucleotide sequence ID" value="NC_003923.1"/>
</dbReference>
<dbReference type="SMR" id="Q8NYM6"/>
<dbReference type="KEGG" id="sam:MW0158"/>
<dbReference type="HOGENOM" id="CLU_006384_0_1_9"/>
<dbReference type="UniPathway" id="UPA00068">
    <property type="reaction ID" value="UER00108"/>
</dbReference>
<dbReference type="GO" id="GO:0005737">
    <property type="term" value="C:cytoplasm"/>
    <property type="evidence" value="ECO:0007669"/>
    <property type="project" value="UniProtKB-SubCell"/>
</dbReference>
<dbReference type="GO" id="GO:0003942">
    <property type="term" value="F:N-acetyl-gamma-glutamyl-phosphate reductase activity"/>
    <property type="evidence" value="ECO:0007669"/>
    <property type="project" value="UniProtKB-UniRule"/>
</dbReference>
<dbReference type="GO" id="GO:0051287">
    <property type="term" value="F:NAD binding"/>
    <property type="evidence" value="ECO:0007669"/>
    <property type="project" value="InterPro"/>
</dbReference>
<dbReference type="GO" id="GO:0070401">
    <property type="term" value="F:NADP+ binding"/>
    <property type="evidence" value="ECO:0007669"/>
    <property type="project" value="InterPro"/>
</dbReference>
<dbReference type="GO" id="GO:0006526">
    <property type="term" value="P:L-arginine biosynthetic process"/>
    <property type="evidence" value="ECO:0007669"/>
    <property type="project" value="UniProtKB-UniRule"/>
</dbReference>
<dbReference type="CDD" id="cd23934">
    <property type="entry name" value="AGPR_1_C"/>
    <property type="match status" value="1"/>
</dbReference>
<dbReference type="CDD" id="cd17895">
    <property type="entry name" value="AGPR_1_N"/>
    <property type="match status" value="1"/>
</dbReference>
<dbReference type="FunFam" id="3.30.360.10:FF:000014">
    <property type="entry name" value="N-acetyl-gamma-glutamyl-phosphate reductase"/>
    <property type="match status" value="1"/>
</dbReference>
<dbReference type="Gene3D" id="3.30.360.10">
    <property type="entry name" value="Dihydrodipicolinate Reductase, domain 2"/>
    <property type="match status" value="1"/>
</dbReference>
<dbReference type="Gene3D" id="3.40.50.720">
    <property type="entry name" value="NAD(P)-binding Rossmann-like Domain"/>
    <property type="match status" value="1"/>
</dbReference>
<dbReference type="HAMAP" id="MF_00150">
    <property type="entry name" value="ArgC_type1"/>
    <property type="match status" value="1"/>
</dbReference>
<dbReference type="InterPro" id="IPR023013">
    <property type="entry name" value="AGPR_AS"/>
</dbReference>
<dbReference type="InterPro" id="IPR000706">
    <property type="entry name" value="AGPR_type-1"/>
</dbReference>
<dbReference type="InterPro" id="IPR036291">
    <property type="entry name" value="NAD(P)-bd_dom_sf"/>
</dbReference>
<dbReference type="InterPro" id="IPR050085">
    <property type="entry name" value="NAGSA_dehydrogenase"/>
</dbReference>
<dbReference type="InterPro" id="IPR000534">
    <property type="entry name" value="Semialdehyde_DH_NAD-bd"/>
</dbReference>
<dbReference type="NCBIfam" id="TIGR01850">
    <property type="entry name" value="argC"/>
    <property type="match status" value="1"/>
</dbReference>
<dbReference type="PANTHER" id="PTHR32338:SF10">
    <property type="entry name" value="N-ACETYL-GAMMA-GLUTAMYL-PHOSPHATE REDUCTASE, CHLOROPLASTIC-RELATED"/>
    <property type="match status" value="1"/>
</dbReference>
<dbReference type="PANTHER" id="PTHR32338">
    <property type="entry name" value="N-ACETYL-GAMMA-GLUTAMYL-PHOSPHATE REDUCTASE, CHLOROPLASTIC-RELATED-RELATED"/>
    <property type="match status" value="1"/>
</dbReference>
<dbReference type="Pfam" id="PF01118">
    <property type="entry name" value="Semialdhyde_dh"/>
    <property type="match status" value="1"/>
</dbReference>
<dbReference type="Pfam" id="PF22698">
    <property type="entry name" value="Semialdhyde_dhC_1"/>
    <property type="match status" value="1"/>
</dbReference>
<dbReference type="SMART" id="SM00859">
    <property type="entry name" value="Semialdhyde_dh"/>
    <property type="match status" value="1"/>
</dbReference>
<dbReference type="SUPFAM" id="SSF55347">
    <property type="entry name" value="Glyceraldehyde-3-phosphate dehydrogenase-like, C-terminal domain"/>
    <property type="match status" value="1"/>
</dbReference>
<dbReference type="SUPFAM" id="SSF51735">
    <property type="entry name" value="NAD(P)-binding Rossmann-fold domains"/>
    <property type="match status" value="1"/>
</dbReference>
<dbReference type="PROSITE" id="PS01224">
    <property type="entry name" value="ARGC"/>
    <property type="match status" value="1"/>
</dbReference>
<organism>
    <name type="scientific">Staphylococcus aureus (strain MW2)</name>
    <dbReference type="NCBI Taxonomy" id="196620"/>
    <lineage>
        <taxon>Bacteria</taxon>
        <taxon>Bacillati</taxon>
        <taxon>Bacillota</taxon>
        <taxon>Bacilli</taxon>
        <taxon>Bacillales</taxon>
        <taxon>Staphylococcaceae</taxon>
        <taxon>Staphylococcus</taxon>
    </lineage>
</organism>
<accession>Q8NYM6</accession>
<gene>
    <name evidence="1" type="primary">argC</name>
    <name type="ordered locus">MW0158</name>
</gene>
<proteinExistence type="inferred from homology"/>
<protein>
    <recommendedName>
        <fullName evidence="1">N-acetyl-gamma-glutamyl-phosphate reductase</fullName>
        <shortName evidence="1">AGPR</shortName>
        <ecNumber evidence="1">1.2.1.38</ecNumber>
    </recommendedName>
    <alternativeName>
        <fullName evidence="1">N-acetyl-glutamate semialdehyde dehydrogenase</fullName>
        <shortName evidence="1">NAGSA dehydrogenase</shortName>
    </alternativeName>
</protein>
<comment type="function">
    <text evidence="1">Catalyzes the NADPH-dependent reduction of N-acetyl-5-glutamyl phosphate to yield N-acetyl-L-glutamate 5-semialdehyde.</text>
</comment>
<comment type="catalytic activity">
    <reaction evidence="1">
        <text>N-acetyl-L-glutamate 5-semialdehyde + phosphate + NADP(+) = N-acetyl-L-glutamyl 5-phosphate + NADPH + H(+)</text>
        <dbReference type="Rhea" id="RHEA:21588"/>
        <dbReference type="ChEBI" id="CHEBI:15378"/>
        <dbReference type="ChEBI" id="CHEBI:29123"/>
        <dbReference type="ChEBI" id="CHEBI:43474"/>
        <dbReference type="ChEBI" id="CHEBI:57783"/>
        <dbReference type="ChEBI" id="CHEBI:57936"/>
        <dbReference type="ChEBI" id="CHEBI:58349"/>
        <dbReference type="EC" id="1.2.1.38"/>
    </reaction>
</comment>
<comment type="pathway">
    <text evidence="1">Amino-acid biosynthesis; L-arginine biosynthesis; N(2)-acetyl-L-ornithine from L-glutamate: step 3/4.</text>
</comment>
<comment type="subcellular location">
    <subcellularLocation>
        <location evidence="1">Cytoplasm</location>
    </subcellularLocation>
</comment>
<comment type="similarity">
    <text evidence="1">Belongs to the NAGSA dehydrogenase family. Type 1 subfamily.</text>
</comment>
<reference key="1">
    <citation type="journal article" date="2002" name="Lancet">
        <title>Genome and virulence determinants of high virulence community-acquired MRSA.</title>
        <authorList>
            <person name="Baba T."/>
            <person name="Takeuchi F."/>
            <person name="Kuroda M."/>
            <person name="Yuzawa H."/>
            <person name="Aoki K."/>
            <person name="Oguchi A."/>
            <person name="Nagai Y."/>
            <person name="Iwama N."/>
            <person name="Asano K."/>
            <person name="Naimi T."/>
            <person name="Kuroda H."/>
            <person name="Cui L."/>
            <person name="Yamamoto K."/>
            <person name="Hiramatsu K."/>
        </authorList>
    </citation>
    <scope>NUCLEOTIDE SEQUENCE [LARGE SCALE GENOMIC DNA]</scope>
    <source>
        <strain>MW2</strain>
    </source>
</reference>
<feature type="chain" id="PRO_0000112453" description="N-acetyl-gamma-glutamyl-phosphate reductase">
    <location>
        <begin position="1"/>
        <end position="343"/>
    </location>
</feature>
<feature type="active site" evidence="1">
    <location>
        <position position="147"/>
    </location>
</feature>